<name>MOK_HUMAN</name>
<protein>
    <recommendedName>
        <fullName>MAPK/MAK/MRK overlapping kinase</fullName>
        <ecNumber evidence="2">2.7.11.22</ecNumber>
    </recommendedName>
    <alternativeName>
        <fullName>MOK protein kinase</fullName>
    </alternativeName>
    <alternativeName>
        <fullName>Renal tumor antigen 1</fullName>
        <shortName>RAGE-1</shortName>
    </alternativeName>
</protein>
<sequence length="419" mass="48014">MKNYKAIGKIGEGTFSEVMKMQSLRDGNYYACKQMKQRFESIEQVNNLREIQALRRLNPHPNILMLHEVVFDRKSGSLALICELMDMNIYELIRGRRYPLSEKKIMHYMYQLCKSLDHIHRNGIFHRDVKPENILIKQDVLKLGDFGSCRSVYSKQPYTEYISTRWYRAPECLLTDGFYTYKMDLWSAGCVFYEIASLQPLFPGVNELDQISKIHDVIGTPAQKILTKFKQSRAMNFDFPFKKGSGIPLLTTNLSPQCLSLLHAMVAYDPDERIAAHQALQHPYFQEQRKTEKRALGSHRKAGFPEHPVAPEPLSNSCQISKEGRKQKQSLKQEEDRPKRRGPAYVMELPKLKLSGVVRLSSYSSPTLQSVLGSGTNGRVPVLRPLKCIPASKKTDPQKDLKPAPQQCRLPTIVRKGGR</sequence>
<feature type="chain" id="PRO_0000086341" description="MAPK/MAK/MRK overlapping kinase">
    <location>
        <begin position="1"/>
        <end position="419"/>
    </location>
</feature>
<feature type="domain" description="Protein kinase" evidence="3">
    <location>
        <begin position="4"/>
        <end position="285"/>
    </location>
</feature>
<feature type="region of interest" description="Disordered" evidence="5">
    <location>
        <begin position="285"/>
        <end position="344"/>
    </location>
</feature>
<feature type="region of interest" description="Disordered" evidence="5">
    <location>
        <begin position="390"/>
        <end position="419"/>
    </location>
</feature>
<feature type="compositionally biased region" description="Basic and acidic residues" evidence="5">
    <location>
        <begin position="322"/>
        <end position="338"/>
    </location>
</feature>
<feature type="compositionally biased region" description="Basic and acidic residues" evidence="5">
    <location>
        <begin position="393"/>
        <end position="402"/>
    </location>
</feature>
<feature type="active site" description="Proton acceptor" evidence="3 4">
    <location>
        <position position="128"/>
    </location>
</feature>
<feature type="binding site" evidence="3">
    <location>
        <begin position="10"/>
        <end position="18"/>
    </location>
    <ligand>
        <name>ATP</name>
        <dbReference type="ChEBI" id="CHEBI:30616"/>
    </ligand>
</feature>
<feature type="binding site" evidence="3">
    <location>
        <position position="33"/>
    </location>
    <ligand>
        <name>ATP</name>
        <dbReference type="ChEBI" id="CHEBI:30616"/>
    </ligand>
</feature>
<feature type="splice variant" id="VSP_009143" description="In isoform 3." evidence="10">
    <location>
        <begin position="1"/>
        <end position="346"/>
    </location>
</feature>
<feature type="splice variant" id="VSP_009142" description="In isoform 4." evidence="10">
    <location>
        <begin position="1"/>
        <end position="234"/>
    </location>
</feature>
<feature type="splice variant" id="VSP_054734" description="In isoform 5." evidence="8">
    <location>
        <begin position="42"/>
        <end position="71"/>
    </location>
</feature>
<feature type="splice variant" id="VSP_054735" description="In isoform 6." evidence="11">
    <location>
        <position position="138"/>
    </location>
</feature>
<feature type="splice variant" id="VSP_009144" description="In isoform 2." evidence="9">
    <location>
        <begin position="232"/>
        <end position="419"/>
    </location>
</feature>
<feature type="splice variant" id="VSP_009145" description="In isoform 4." evidence="10">
    <original>KTEKRALGSHRKAGFPEHPVAPEPLSNSCQISKEGRKQKQ</original>
    <variation>TQNGSEDEASAVLLPIQTRSSLNPLLSTCMLPGRSVTLLV</variation>
    <location>
        <begin position="290"/>
        <end position="329"/>
    </location>
</feature>
<feature type="splice variant" id="VSP_009146" description="In isoform 4." evidence="10">
    <location>
        <begin position="330"/>
        <end position="419"/>
    </location>
</feature>
<feature type="sequence variant" id="VAR_042011" description="In dbSNP:rs34114580." evidence="7">
    <original>R</original>
    <variation>H</variation>
    <location>
        <position position="38"/>
    </location>
</feature>
<feature type="sequence variant" id="VAR_042012" description="In dbSNP:rs34084056." evidence="7">
    <original>D</original>
    <variation>N</variation>
    <location>
        <position position="86"/>
    </location>
</feature>
<feature type="sequence variant" id="VAR_070930" description="In dbSNP:rs148360666." evidence="6">
    <original>V</original>
    <variation>I</variation>
    <location>
        <position position="217"/>
    </location>
</feature>
<feature type="sequence variant" id="VAR_042013" description="In dbSNP:rs34965156." evidence="7">
    <original>K</original>
    <variation>R</variation>
    <location>
        <position position="230"/>
    </location>
</feature>
<feature type="sequence variant" id="VAR_042014" description="In dbSNP:rs34299975." evidence="7">
    <original>P</original>
    <variation>S</variation>
    <location>
        <position position="248"/>
    </location>
</feature>
<feature type="sequence variant" id="VAR_042015" description="In a breast pleomorphic lobular carcinoma sample; somatic mutation; dbSNP:rs1567133856." evidence="7">
    <original>E</original>
    <variation>D</variation>
    <location>
        <position position="272"/>
    </location>
</feature>
<feature type="sequence variant" id="VAR_024576" description="In dbSNP:rs2236493." evidence="7">
    <original>Q</original>
    <variation>R</variation>
    <location>
        <position position="398"/>
    </location>
</feature>
<feature type="sequence conflict" description="In Ref. 3; BAG35641." evidence="11" ref="3">
    <original>D</original>
    <variation>G</variation>
    <location>
        <position position="269"/>
    </location>
</feature>
<feature type="sequence conflict" description="In Ref. 3; BAG35641." evidence="11" ref="3">
    <original>P</original>
    <variation>L</variation>
    <location>
        <position position="313"/>
    </location>
</feature>
<evidence type="ECO:0000250" key="1"/>
<evidence type="ECO:0000250" key="2">
    <source>
        <dbReference type="UniProtKB" id="Q9WVS4"/>
    </source>
</evidence>
<evidence type="ECO:0000255" key="3">
    <source>
        <dbReference type="PROSITE-ProRule" id="PRU00159"/>
    </source>
</evidence>
<evidence type="ECO:0000255" key="4">
    <source>
        <dbReference type="PROSITE-ProRule" id="PRU10027"/>
    </source>
</evidence>
<evidence type="ECO:0000256" key="5">
    <source>
        <dbReference type="SAM" id="MobiDB-lite"/>
    </source>
</evidence>
<evidence type="ECO:0000269" key="6">
    <source>
    </source>
</evidence>
<evidence type="ECO:0000269" key="7">
    <source>
    </source>
</evidence>
<evidence type="ECO:0000303" key="8">
    <source>
    </source>
</evidence>
<evidence type="ECO:0000303" key="9">
    <source>
    </source>
</evidence>
<evidence type="ECO:0000303" key="10">
    <source>
    </source>
</evidence>
<evidence type="ECO:0000305" key="11"/>
<organism>
    <name type="scientific">Homo sapiens</name>
    <name type="common">Human</name>
    <dbReference type="NCBI Taxonomy" id="9606"/>
    <lineage>
        <taxon>Eukaryota</taxon>
        <taxon>Metazoa</taxon>
        <taxon>Chordata</taxon>
        <taxon>Craniata</taxon>
        <taxon>Vertebrata</taxon>
        <taxon>Euteleostomi</taxon>
        <taxon>Mammalia</taxon>
        <taxon>Eutheria</taxon>
        <taxon>Euarchontoglires</taxon>
        <taxon>Primates</taxon>
        <taxon>Haplorrhini</taxon>
        <taxon>Catarrhini</taxon>
        <taxon>Hominidae</taxon>
        <taxon>Homo</taxon>
    </lineage>
</organism>
<proteinExistence type="evidence at protein level"/>
<reference key="1">
    <citation type="journal article" date="1999" name="Genes Cells">
        <title>Molecular cloning and characterization of a novel member of the MAP kinase superfamily.</title>
        <authorList>
            <person name="Miyata Y."/>
            <person name="Akashi M."/>
            <person name="Nishida E."/>
        </authorList>
    </citation>
    <scope>NUCLEOTIDE SEQUENCE [MRNA] (ISOFORM 1)</scope>
    <source>
        <tissue>Fetal brain</tissue>
    </source>
</reference>
<reference key="2">
    <citation type="journal article" date="1996" name="Immunogenetics">
        <title>A new gene coding for an antigen recognized by autologous cytolytic T lymphocytes on a human renal carcinoma.</title>
        <authorList>
            <person name="Gaugler B."/>
            <person name="Brouwenstijn N."/>
            <person name="Vantomme V."/>
            <person name="Szikora J.-P."/>
            <person name="Van der Spek C.W."/>
            <person name="Patard J.-J."/>
            <person name="Boon T."/>
            <person name="Schrier P."/>
            <person name="Van den Eynde B.J."/>
        </authorList>
    </citation>
    <scope>NUCLEOTIDE SEQUENCE [MRNA] (ISOFORMS 3 AND 4)</scope>
    <source>
        <tissue>Renal cell carcinoma</tissue>
    </source>
</reference>
<reference key="3">
    <citation type="journal article" date="2004" name="Nat. Genet.">
        <title>Complete sequencing and characterization of 21,243 full-length human cDNAs.</title>
        <authorList>
            <person name="Ota T."/>
            <person name="Suzuki Y."/>
            <person name="Nishikawa T."/>
            <person name="Otsuki T."/>
            <person name="Sugiyama T."/>
            <person name="Irie R."/>
            <person name="Wakamatsu A."/>
            <person name="Hayashi K."/>
            <person name="Sato H."/>
            <person name="Nagai K."/>
            <person name="Kimura K."/>
            <person name="Makita H."/>
            <person name="Sekine M."/>
            <person name="Obayashi M."/>
            <person name="Nishi T."/>
            <person name="Shibahara T."/>
            <person name="Tanaka T."/>
            <person name="Ishii S."/>
            <person name="Yamamoto J."/>
            <person name="Saito K."/>
            <person name="Kawai Y."/>
            <person name="Isono Y."/>
            <person name="Nakamura Y."/>
            <person name="Nagahari K."/>
            <person name="Murakami K."/>
            <person name="Yasuda T."/>
            <person name="Iwayanagi T."/>
            <person name="Wagatsuma M."/>
            <person name="Shiratori A."/>
            <person name="Sudo H."/>
            <person name="Hosoiri T."/>
            <person name="Kaku Y."/>
            <person name="Kodaira H."/>
            <person name="Kondo H."/>
            <person name="Sugawara M."/>
            <person name="Takahashi M."/>
            <person name="Kanda K."/>
            <person name="Yokoi T."/>
            <person name="Furuya T."/>
            <person name="Kikkawa E."/>
            <person name="Omura Y."/>
            <person name="Abe K."/>
            <person name="Kamihara K."/>
            <person name="Katsuta N."/>
            <person name="Sato K."/>
            <person name="Tanikawa M."/>
            <person name="Yamazaki M."/>
            <person name="Ninomiya K."/>
            <person name="Ishibashi T."/>
            <person name="Yamashita H."/>
            <person name="Murakawa K."/>
            <person name="Fujimori K."/>
            <person name="Tanai H."/>
            <person name="Kimata M."/>
            <person name="Watanabe M."/>
            <person name="Hiraoka S."/>
            <person name="Chiba Y."/>
            <person name="Ishida S."/>
            <person name="Ono Y."/>
            <person name="Takiguchi S."/>
            <person name="Watanabe S."/>
            <person name="Yosida M."/>
            <person name="Hotuta T."/>
            <person name="Kusano J."/>
            <person name="Kanehori K."/>
            <person name="Takahashi-Fujii A."/>
            <person name="Hara H."/>
            <person name="Tanase T.-O."/>
            <person name="Nomura Y."/>
            <person name="Togiya S."/>
            <person name="Komai F."/>
            <person name="Hara R."/>
            <person name="Takeuchi K."/>
            <person name="Arita M."/>
            <person name="Imose N."/>
            <person name="Musashino K."/>
            <person name="Yuuki H."/>
            <person name="Oshima A."/>
            <person name="Sasaki N."/>
            <person name="Aotsuka S."/>
            <person name="Yoshikawa Y."/>
            <person name="Matsunawa H."/>
            <person name="Ichihara T."/>
            <person name="Shiohata N."/>
            <person name="Sano S."/>
            <person name="Moriya S."/>
            <person name="Momiyama H."/>
            <person name="Satoh N."/>
            <person name="Takami S."/>
            <person name="Terashima Y."/>
            <person name="Suzuki O."/>
            <person name="Nakagawa S."/>
            <person name="Senoh A."/>
            <person name="Mizoguchi H."/>
            <person name="Goto Y."/>
            <person name="Shimizu F."/>
            <person name="Wakebe H."/>
            <person name="Hishigaki H."/>
            <person name="Watanabe T."/>
            <person name="Sugiyama A."/>
            <person name="Takemoto M."/>
            <person name="Kawakami B."/>
            <person name="Yamazaki M."/>
            <person name="Watanabe K."/>
            <person name="Kumagai A."/>
            <person name="Itakura S."/>
            <person name="Fukuzumi Y."/>
            <person name="Fujimori Y."/>
            <person name="Komiyama M."/>
            <person name="Tashiro H."/>
            <person name="Tanigami A."/>
            <person name="Fujiwara T."/>
            <person name="Ono T."/>
            <person name="Yamada K."/>
            <person name="Fujii Y."/>
            <person name="Ozaki K."/>
            <person name="Hirao M."/>
            <person name="Ohmori Y."/>
            <person name="Kawabata A."/>
            <person name="Hikiji T."/>
            <person name="Kobatake N."/>
            <person name="Inagaki H."/>
            <person name="Ikema Y."/>
            <person name="Okamoto S."/>
            <person name="Okitani R."/>
            <person name="Kawakami T."/>
            <person name="Noguchi S."/>
            <person name="Itoh T."/>
            <person name="Shigeta K."/>
            <person name="Senba T."/>
            <person name="Matsumura K."/>
            <person name="Nakajima Y."/>
            <person name="Mizuno T."/>
            <person name="Morinaga M."/>
            <person name="Sasaki M."/>
            <person name="Togashi T."/>
            <person name="Oyama M."/>
            <person name="Hata H."/>
            <person name="Watanabe M."/>
            <person name="Komatsu T."/>
            <person name="Mizushima-Sugano J."/>
            <person name="Satoh T."/>
            <person name="Shirai Y."/>
            <person name="Takahashi Y."/>
            <person name="Nakagawa K."/>
            <person name="Okumura K."/>
            <person name="Nagase T."/>
            <person name="Nomura N."/>
            <person name="Kikuchi H."/>
            <person name="Masuho Y."/>
            <person name="Yamashita R."/>
            <person name="Nakai K."/>
            <person name="Yada T."/>
            <person name="Nakamura Y."/>
            <person name="Ohara O."/>
            <person name="Isogai T."/>
            <person name="Sugano S."/>
        </authorList>
    </citation>
    <scope>NUCLEOTIDE SEQUENCE [LARGE SCALE MRNA] (ISOFORM 5)</scope>
    <scope>VARIANT ILE-217</scope>
    <source>
        <tissue>Testis</tissue>
    </source>
</reference>
<reference key="4">
    <citation type="journal article" date="2003" name="Nature">
        <title>The DNA sequence and analysis of human chromosome 14.</title>
        <authorList>
            <person name="Heilig R."/>
            <person name="Eckenberg R."/>
            <person name="Petit J.-L."/>
            <person name="Fonknechten N."/>
            <person name="Da Silva C."/>
            <person name="Cattolico L."/>
            <person name="Levy M."/>
            <person name="Barbe V."/>
            <person name="De Berardinis V."/>
            <person name="Ureta-Vidal A."/>
            <person name="Pelletier E."/>
            <person name="Vico V."/>
            <person name="Anthouard V."/>
            <person name="Rowen L."/>
            <person name="Madan A."/>
            <person name="Qin S."/>
            <person name="Sun H."/>
            <person name="Du H."/>
            <person name="Pepin K."/>
            <person name="Artiguenave F."/>
            <person name="Robert C."/>
            <person name="Cruaud C."/>
            <person name="Bruels T."/>
            <person name="Jaillon O."/>
            <person name="Friedlander L."/>
            <person name="Samson G."/>
            <person name="Brottier P."/>
            <person name="Cure S."/>
            <person name="Segurens B."/>
            <person name="Aniere F."/>
            <person name="Samain S."/>
            <person name="Crespeau H."/>
            <person name="Abbasi N."/>
            <person name="Aiach N."/>
            <person name="Boscus D."/>
            <person name="Dickhoff R."/>
            <person name="Dors M."/>
            <person name="Dubois I."/>
            <person name="Friedman C."/>
            <person name="Gouyvenoux M."/>
            <person name="James R."/>
            <person name="Madan A."/>
            <person name="Mairey-Estrada B."/>
            <person name="Mangenot S."/>
            <person name="Martins N."/>
            <person name="Menard M."/>
            <person name="Oztas S."/>
            <person name="Ratcliffe A."/>
            <person name="Shaffer T."/>
            <person name="Trask B."/>
            <person name="Vacherie B."/>
            <person name="Bellemere C."/>
            <person name="Belser C."/>
            <person name="Besnard-Gonnet M."/>
            <person name="Bartol-Mavel D."/>
            <person name="Boutard M."/>
            <person name="Briez-Silla S."/>
            <person name="Combette S."/>
            <person name="Dufosse-Laurent V."/>
            <person name="Ferron C."/>
            <person name="Lechaplais C."/>
            <person name="Louesse C."/>
            <person name="Muselet D."/>
            <person name="Magdelenat G."/>
            <person name="Pateau E."/>
            <person name="Petit E."/>
            <person name="Sirvain-Trukniewicz P."/>
            <person name="Trybou A."/>
            <person name="Vega-Czarny N."/>
            <person name="Bataille E."/>
            <person name="Bluet E."/>
            <person name="Bordelais I."/>
            <person name="Dubois M."/>
            <person name="Dumont C."/>
            <person name="Guerin T."/>
            <person name="Haffray S."/>
            <person name="Hammadi R."/>
            <person name="Muanga J."/>
            <person name="Pellouin V."/>
            <person name="Robert D."/>
            <person name="Wunderle E."/>
            <person name="Gauguet G."/>
            <person name="Roy A."/>
            <person name="Sainte-Marthe L."/>
            <person name="Verdier J."/>
            <person name="Verdier-Discala C."/>
            <person name="Hillier L.W."/>
            <person name="Fulton L."/>
            <person name="McPherson J."/>
            <person name="Matsuda F."/>
            <person name="Wilson R."/>
            <person name="Scarpelli C."/>
            <person name="Gyapay G."/>
            <person name="Wincker P."/>
            <person name="Saurin W."/>
            <person name="Quetier F."/>
            <person name="Waterston R."/>
            <person name="Hood L."/>
            <person name="Weissenbach J."/>
        </authorList>
    </citation>
    <scope>NUCLEOTIDE SEQUENCE [LARGE SCALE GENOMIC DNA]</scope>
</reference>
<reference key="5">
    <citation type="journal article" date="2004" name="Genome Res.">
        <title>The status, quality, and expansion of the NIH full-length cDNA project: the Mammalian Gene Collection (MGC).</title>
        <authorList>
            <consortium name="The MGC Project Team"/>
        </authorList>
    </citation>
    <scope>NUCLEOTIDE SEQUENCE [LARGE SCALE MRNA] (ISOFORM 2)</scope>
    <source>
        <tissue>Brain</tissue>
        <tissue>Lung</tissue>
        <tissue>Testis</tissue>
    </source>
</reference>
<reference key="6">
    <citation type="journal article" date="2007" name="Nature">
        <title>Patterns of somatic mutation in human cancer genomes.</title>
        <authorList>
            <person name="Greenman C."/>
            <person name="Stephens P."/>
            <person name="Smith R."/>
            <person name="Dalgliesh G.L."/>
            <person name="Hunter C."/>
            <person name="Bignell G."/>
            <person name="Davies H."/>
            <person name="Teague J."/>
            <person name="Butler A."/>
            <person name="Stevens C."/>
            <person name="Edkins S."/>
            <person name="O'Meara S."/>
            <person name="Vastrik I."/>
            <person name="Schmidt E.E."/>
            <person name="Avis T."/>
            <person name="Barthorpe S."/>
            <person name="Bhamra G."/>
            <person name="Buck G."/>
            <person name="Choudhury B."/>
            <person name="Clements J."/>
            <person name="Cole J."/>
            <person name="Dicks E."/>
            <person name="Forbes S."/>
            <person name="Gray K."/>
            <person name="Halliday K."/>
            <person name="Harrison R."/>
            <person name="Hills K."/>
            <person name="Hinton J."/>
            <person name="Jenkinson A."/>
            <person name="Jones D."/>
            <person name="Menzies A."/>
            <person name="Mironenko T."/>
            <person name="Perry J."/>
            <person name="Raine K."/>
            <person name="Richardson D."/>
            <person name="Shepherd R."/>
            <person name="Small A."/>
            <person name="Tofts C."/>
            <person name="Varian J."/>
            <person name="Webb T."/>
            <person name="West S."/>
            <person name="Widaa S."/>
            <person name="Yates A."/>
            <person name="Cahill D.P."/>
            <person name="Louis D.N."/>
            <person name="Goldstraw P."/>
            <person name="Nicholson A.G."/>
            <person name="Brasseur F."/>
            <person name="Looijenga L."/>
            <person name="Weber B.L."/>
            <person name="Chiew Y.-E."/>
            <person name="DeFazio A."/>
            <person name="Greaves M.F."/>
            <person name="Green A.R."/>
            <person name="Campbell P."/>
            <person name="Birney E."/>
            <person name="Easton D.F."/>
            <person name="Chenevix-Trench G."/>
            <person name="Tan M.-H."/>
            <person name="Khoo S.K."/>
            <person name="Teh B.T."/>
            <person name="Yuen S.T."/>
            <person name="Leung S.Y."/>
            <person name="Wooster R."/>
            <person name="Futreal P.A."/>
            <person name="Stratton M.R."/>
        </authorList>
    </citation>
    <scope>VARIANTS [LARGE SCALE ANALYSIS] HIS-38; ASN-86; ARG-230; SER-248; ASP-272 AND ARG-398</scope>
</reference>
<keyword id="KW-0025">Alternative splicing</keyword>
<keyword id="KW-0067">ATP-binding</keyword>
<keyword id="KW-0966">Cell projection</keyword>
<keyword id="KW-0963">Cytoplasm</keyword>
<keyword id="KW-0418">Kinase</keyword>
<keyword id="KW-0460">Magnesium</keyword>
<keyword id="KW-0479">Metal-binding</keyword>
<keyword id="KW-0547">Nucleotide-binding</keyword>
<keyword id="KW-0539">Nucleus</keyword>
<keyword id="KW-0597">Phosphoprotein</keyword>
<keyword id="KW-1267">Proteomics identification</keyword>
<keyword id="KW-1185">Reference proteome</keyword>
<keyword id="KW-0723">Serine/threonine-protein kinase</keyword>
<keyword id="KW-0808">Transferase</keyword>
<accession>Q9UQ07</accession>
<accession>B2R6Z4</accession>
<accession>B7Z7P6</accession>
<accession>E7ER76</accession>
<accession>E7ERR8</accession>
<accession>Q92790</accession>
<accession>Q93067</accession>
<comment type="function">
    <text evidence="2">Able to phosphorylate several exogenous substrates and to undergo autophosphorylation. Negatively regulates cilium length in a cAMP and mTORC1 signaling-dependent manner.</text>
</comment>
<comment type="catalytic activity">
    <reaction evidence="2">
        <text>L-seryl-[protein] + ATP = O-phospho-L-seryl-[protein] + ADP + H(+)</text>
        <dbReference type="Rhea" id="RHEA:17989"/>
        <dbReference type="Rhea" id="RHEA-COMP:9863"/>
        <dbReference type="Rhea" id="RHEA-COMP:11604"/>
        <dbReference type="ChEBI" id="CHEBI:15378"/>
        <dbReference type="ChEBI" id="CHEBI:29999"/>
        <dbReference type="ChEBI" id="CHEBI:30616"/>
        <dbReference type="ChEBI" id="CHEBI:83421"/>
        <dbReference type="ChEBI" id="CHEBI:456216"/>
        <dbReference type="EC" id="2.7.11.22"/>
    </reaction>
</comment>
<comment type="catalytic activity">
    <reaction evidence="2">
        <text>L-threonyl-[protein] + ATP = O-phospho-L-threonyl-[protein] + ADP + H(+)</text>
        <dbReference type="Rhea" id="RHEA:46608"/>
        <dbReference type="Rhea" id="RHEA-COMP:11060"/>
        <dbReference type="Rhea" id="RHEA-COMP:11605"/>
        <dbReference type="ChEBI" id="CHEBI:15378"/>
        <dbReference type="ChEBI" id="CHEBI:30013"/>
        <dbReference type="ChEBI" id="CHEBI:30616"/>
        <dbReference type="ChEBI" id="CHEBI:61977"/>
        <dbReference type="ChEBI" id="CHEBI:456216"/>
        <dbReference type="EC" id="2.7.11.22"/>
    </reaction>
</comment>
<comment type="cofactor">
    <cofactor evidence="2">
        <name>Mg(2+)</name>
        <dbReference type="ChEBI" id="CHEBI:18420"/>
    </cofactor>
</comment>
<comment type="activity regulation">
    <text evidence="1">Phosphorylation appears to increase the enzymatic activity.</text>
</comment>
<comment type="subcellular location">
    <subcellularLocation>
        <location evidence="2">Cytoplasm</location>
    </subcellularLocation>
    <subcellularLocation>
        <location evidence="2">Cell projection</location>
        <location evidence="2">Cilium</location>
    </subcellularLocation>
    <subcellularLocation>
        <location evidence="2">Nucleus</location>
    </subcellularLocation>
</comment>
<comment type="alternative products">
    <event type="alternative splicing"/>
    <isoform>
        <id>Q9UQ07-1</id>
        <name>1</name>
        <sequence type="displayed"/>
    </isoform>
    <isoform>
        <id>Q9UQ07-2</id>
        <name>2</name>
        <sequence type="described" ref="VSP_009144"/>
    </isoform>
    <isoform>
        <id>Q9UQ07-3</id>
        <name>3</name>
        <name>RAGE-1 ORF5</name>
        <name>RAGE-2 ORF5</name>
        <name>RAGE-3 ORF5</name>
        <sequence type="described" ref="VSP_009143"/>
    </isoform>
    <isoform>
        <id>Q9UQ07-4</id>
        <name>4</name>
        <name>RAGE-4 ORF3</name>
        <sequence type="described" ref="VSP_009142 VSP_009145 VSP_009146"/>
    </isoform>
    <isoform>
        <id>Q9UQ07-5</id>
        <name>5</name>
        <sequence type="described" ref="VSP_054734"/>
    </isoform>
    <isoform>
        <id>Q9UQ07-6</id>
        <name>6</name>
        <sequence type="described" ref="VSP_054735"/>
    </isoform>
</comment>
<comment type="tissue specificity">
    <text>Expressed in heart, brain, lung, kidney, and pancreas, and at very low levels in placenta, liver and skeletal muscle. Detected in retina.</text>
</comment>
<comment type="PTM">
    <text evidence="1">Autophosphorylated.</text>
</comment>
<comment type="similarity">
    <text evidence="11">Belongs to the protein kinase superfamily. CMGC Ser/Thr protein kinase family. CDC2/CDKX subfamily.</text>
</comment>
<comment type="sequence caution" evidence="11">
    <conflict type="frameshift">
        <sequence resource="EMBL-CDS" id="AAB38087"/>
    </conflict>
</comment>
<gene>
    <name type="primary">MOK</name>
    <name type="synonym">RAGE</name>
    <name type="synonym">RAGE1</name>
</gene>
<dbReference type="EC" id="2.7.11.22" evidence="2"/>
<dbReference type="EMBL" id="AB022694">
    <property type="protein sequence ID" value="BAA81688.1"/>
    <property type="molecule type" value="mRNA"/>
</dbReference>
<dbReference type="EMBL" id="U46191">
    <property type="protein sequence ID" value="AAB38079.1"/>
    <property type="molecule type" value="mRNA"/>
</dbReference>
<dbReference type="EMBL" id="U46192">
    <property type="protein sequence ID" value="AAB38082.1"/>
    <property type="molecule type" value="mRNA"/>
</dbReference>
<dbReference type="EMBL" id="U46193">
    <property type="protein sequence ID" value="AAB38085.1"/>
    <property type="molecule type" value="mRNA"/>
</dbReference>
<dbReference type="EMBL" id="U46194">
    <property type="protein sequence ID" value="AAB38087.1"/>
    <property type="status" value="ALT_FRAME"/>
    <property type="molecule type" value="mRNA"/>
</dbReference>
<dbReference type="EMBL" id="AK302349">
    <property type="protein sequence ID" value="BAH13682.1"/>
    <property type="molecule type" value="mRNA"/>
</dbReference>
<dbReference type="EMBL" id="AK312778">
    <property type="protein sequence ID" value="BAG35641.1"/>
    <property type="molecule type" value="mRNA"/>
</dbReference>
<dbReference type="EMBL" id="AL352978">
    <property type="status" value="NOT_ANNOTATED_CDS"/>
    <property type="molecule type" value="Genomic_DNA"/>
</dbReference>
<dbReference type="EMBL" id="AL359402">
    <property type="status" value="NOT_ANNOTATED_CDS"/>
    <property type="molecule type" value="Genomic_DNA"/>
</dbReference>
<dbReference type="EMBL" id="BC053536">
    <property type="protein sequence ID" value="AAH53536.1"/>
    <property type="molecule type" value="mRNA"/>
</dbReference>
<dbReference type="CCDS" id="CCDS61552.1">
    <molecule id="Q9UQ07-5"/>
</dbReference>
<dbReference type="CCDS" id="CCDS81854.1">
    <molecule id="Q9UQ07-6"/>
</dbReference>
<dbReference type="CCDS" id="CCDS9971.1">
    <molecule id="Q9UQ07-1"/>
</dbReference>
<dbReference type="RefSeq" id="NP_001258940.1">
    <molecule id="Q9UQ07-5"/>
    <property type="nucleotide sequence ID" value="NM_001272011.2"/>
</dbReference>
<dbReference type="RefSeq" id="NP_001317163.1">
    <molecule id="Q9UQ07-6"/>
    <property type="nucleotide sequence ID" value="NM_001330234.2"/>
</dbReference>
<dbReference type="RefSeq" id="NP_055041.1">
    <molecule id="Q9UQ07-1"/>
    <property type="nucleotide sequence ID" value="NM_014226.3"/>
</dbReference>
<dbReference type="SMR" id="Q9UQ07"/>
<dbReference type="BioGRID" id="111828">
    <property type="interactions" value="28"/>
</dbReference>
<dbReference type="FunCoup" id="Q9UQ07">
    <property type="interactions" value="1059"/>
</dbReference>
<dbReference type="IntAct" id="Q9UQ07">
    <property type="interactions" value="20"/>
</dbReference>
<dbReference type="MINT" id="Q9UQ07"/>
<dbReference type="STRING" id="9606.ENSP00000355304"/>
<dbReference type="BindingDB" id="Q9UQ07"/>
<dbReference type="ChEMBL" id="CHEMBL4295983"/>
<dbReference type="GlyGen" id="Q9UQ07">
    <property type="glycosylation" value="1 site"/>
</dbReference>
<dbReference type="iPTMnet" id="Q9UQ07"/>
<dbReference type="PhosphoSitePlus" id="Q9UQ07"/>
<dbReference type="BioMuta" id="MOK"/>
<dbReference type="jPOST" id="Q9UQ07"/>
<dbReference type="MassIVE" id="Q9UQ07"/>
<dbReference type="PaxDb" id="9606-ENSP00000355304"/>
<dbReference type="PeptideAtlas" id="Q9UQ07"/>
<dbReference type="TopDownProteomics" id="Q9UQ07-4">
    <molecule id="Q9UQ07-4"/>
</dbReference>
<dbReference type="ABCD" id="Q9UQ07">
    <property type="antibodies" value="8 sequenced antibodies"/>
</dbReference>
<dbReference type="Antibodypedia" id="27789">
    <property type="antibodies" value="446 antibodies from 33 providers"/>
</dbReference>
<dbReference type="DNASU" id="5891"/>
<dbReference type="Ensembl" id="ENST00000361847.7">
    <molecule id="Q9UQ07-1"/>
    <property type="protein sequence ID" value="ENSP00000355304.2"/>
    <property type="gene ID" value="ENSG00000080823.23"/>
</dbReference>
<dbReference type="Ensembl" id="ENST00000522874.5">
    <molecule id="Q9UQ07-6"/>
    <property type="protein sequence ID" value="ENSP00000429469.1"/>
    <property type="gene ID" value="ENSG00000080823.23"/>
</dbReference>
<dbReference type="Ensembl" id="ENST00000524214.5">
    <molecule id="Q9UQ07-5"/>
    <property type="protein sequence ID" value="ENSP00000428942.1"/>
    <property type="gene ID" value="ENSG00000080823.23"/>
</dbReference>
<dbReference type="GeneID" id="5891"/>
<dbReference type="KEGG" id="hsa:5891"/>
<dbReference type="MANE-Select" id="ENST00000361847.7">
    <property type="protein sequence ID" value="ENSP00000355304.2"/>
    <property type="RefSeq nucleotide sequence ID" value="NM_014226.3"/>
    <property type="RefSeq protein sequence ID" value="NP_055041.1"/>
</dbReference>
<dbReference type="UCSC" id="uc001ylm.5">
    <molecule id="Q9UQ07-1"/>
    <property type="organism name" value="human"/>
</dbReference>
<dbReference type="AGR" id="HGNC:9833"/>
<dbReference type="CTD" id="5891"/>
<dbReference type="DisGeNET" id="5891"/>
<dbReference type="GeneCards" id="MOK"/>
<dbReference type="HGNC" id="HGNC:9833">
    <property type="gene designation" value="MOK"/>
</dbReference>
<dbReference type="HPA" id="ENSG00000080823">
    <property type="expression patterns" value="Tissue enhanced (retina, testis)"/>
</dbReference>
<dbReference type="MIM" id="605762">
    <property type="type" value="gene"/>
</dbReference>
<dbReference type="neXtProt" id="NX_Q9UQ07"/>
<dbReference type="OpenTargets" id="ENSG00000080823"/>
<dbReference type="PharmGKB" id="PA34187"/>
<dbReference type="VEuPathDB" id="HostDB:ENSG00000080823"/>
<dbReference type="eggNOG" id="KOG0661">
    <property type="taxonomic scope" value="Eukaryota"/>
</dbReference>
<dbReference type="GeneTree" id="ENSGT00940000159582"/>
<dbReference type="InParanoid" id="Q9UQ07"/>
<dbReference type="OMA" id="FHFPFKK"/>
<dbReference type="OrthoDB" id="2158884at2759"/>
<dbReference type="PAN-GO" id="Q9UQ07">
    <property type="GO annotations" value="4 GO annotations based on evolutionary models"/>
</dbReference>
<dbReference type="PhylomeDB" id="Q9UQ07"/>
<dbReference type="TreeFam" id="TF328769"/>
<dbReference type="PathwayCommons" id="Q9UQ07"/>
<dbReference type="SignaLink" id="Q9UQ07"/>
<dbReference type="BioGRID-ORCS" id="5891">
    <property type="hits" value="69 hits in 1181 CRISPR screens"/>
</dbReference>
<dbReference type="ChiTaRS" id="MOK">
    <property type="organism name" value="human"/>
</dbReference>
<dbReference type="GeneWiki" id="RAGE_(gene)"/>
<dbReference type="GenomeRNAi" id="5891"/>
<dbReference type="Pharos" id="Q9UQ07">
    <property type="development level" value="Tbio"/>
</dbReference>
<dbReference type="PRO" id="PR:Q9UQ07"/>
<dbReference type="Proteomes" id="UP000005640">
    <property type="component" value="Chromosome 14"/>
</dbReference>
<dbReference type="RNAct" id="Q9UQ07">
    <property type="molecule type" value="protein"/>
</dbReference>
<dbReference type="Bgee" id="ENSG00000080823">
    <property type="expression patterns" value="Expressed in right uterine tube and 131 other cell types or tissues"/>
</dbReference>
<dbReference type="ExpressionAtlas" id="Q9UQ07">
    <property type="expression patterns" value="baseline and differential"/>
</dbReference>
<dbReference type="GO" id="GO:0097546">
    <property type="term" value="C:ciliary base"/>
    <property type="evidence" value="ECO:0000250"/>
    <property type="project" value="UniProtKB"/>
</dbReference>
<dbReference type="GO" id="GO:0005929">
    <property type="term" value="C:cilium"/>
    <property type="evidence" value="ECO:0000250"/>
    <property type="project" value="UniProtKB"/>
</dbReference>
<dbReference type="GO" id="GO:0005737">
    <property type="term" value="C:cytoplasm"/>
    <property type="evidence" value="ECO:0000318"/>
    <property type="project" value="GO_Central"/>
</dbReference>
<dbReference type="GO" id="GO:0005634">
    <property type="term" value="C:nucleus"/>
    <property type="evidence" value="ECO:0000250"/>
    <property type="project" value="UniProtKB"/>
</dbReference>
<dbReference type="GO" id="GO:0005524">
    <property type="term" value="F:ATP binding"/>
    <property type="evidence" value="ECO:0007669"/>
    <property type="project" value="UniProtKB-KW"/>
</dbReference>
<dbReference type="GO" id="GO:0004693">
    <property type="term" value="F:cyclin-dependent protein serine/threonine kinase activity"/>
    <property type="evidence" value="ECO:0007669"/>
    <property type="project" value="UniProtKB-EC"/>
</dbReference>
<dbReference type="GO" id="GO:0046872">
    <property type="term" value="F:metal ion binding"/>
    <property type="evidence" value="ECO:0007669"/>
    <property type="project" value="UniProtKB-KW"/>
</dbReference>
<dbReference type="GO" id="GO:0004672">
    <property type="term" value="F:protein kinase activity"/>
    <property type="evidence" value="ECO:0000304"/>
    <property type="project" value="ProtInc"/>
</dbReference>
<dbReference type="GO" id="GO:0106310">
    <property type="term" value="F:protein serine kinase activity"/>
    <property type="evidence" value="ECO:0007669"/>
    <property type="project" value="RHEA"/>
</dbReference>
<dbReference type="GO" id="GO:0004674">
    <property type="term" value="F:protein serine/threonine kinase activity"/>
    <property type="evidence" value="ECO:0000318"/>
    <property type="project" value="GO_Central"/>
</dbReference>
<dbReference type="GO" id="GO:0035556">
    <property type="term" value="P:intracellular signal transduction"/>
    <property type="evidence" value="ECO:0000318"/>
    <property type="project" value="GO_Central"/>
</dbReference>
<dbReference type="GO" id="GO:0006468">
    <property type="term" value="P:protein phosphorylation"/>
    <property type="evidence" value="ECO:0000304"/>
    <property type="project" value="ProtInc"/>
</dbReference>
<dbReference type="GO" id="GO:0007165">
    <property type="term" value="P:signal transduction"/>
    <property type="evidence" value="ECO:0000304"/>
    <property type="project" value="ProtInc"/>
</dbReference>
<dbReference type="CDD" id="cd07831">
    <property type="entry name" value="STKc_MOK"/>
    <property type="match status" value="1"/>
</dbReference>
<dbReference type="FunFam" id="1.10.510.10:FF:000402">
    <property type="entry name" value="MAPK/MAK/MRK overlapping kinase"/>
    <property type="match status" value="1"/>
</dbReference>
<dbReference type="FunFam" id="3.30.200.20:FF:000271">
    <property type="entry name" value="MAPK/MAK/MRK overlapping kinase"/>
    <property type="match status" value="1"/>
</dbReference>
<dbReference type="Gene3D" id="3.30.200.20">
    <property type="entry name" value="Phosphorylase Kinase, domain 1"/>
    <property type="match status" value="1"/>
</dbReference>
<dbReference type="Gene3D" id="1.10.510.10">
    <property type="entry name" value="Transferase(Phosphotransferase) domain 1"/>
    <property type="match status" value="1"/>
</dbReference>
<dbReference type="InterPro" id="IPR011009">
    <property type="entry name" value="Kinase-like_dom_sf"/>
</dbReference>
<dbReference type="InterPro" id="IPR050117">
    <property type="entry name" value="MAP_kinase"/>
</dbReference>
<dbReference type="InterPro" id="IPR000719">
    <property type="entry name" value="Prot_kinase_dom"/>
</dbReference>
<dbReference type="InterPro" id="IPR017441">
    <property type="entry name" value="Protein_kinase_ATP_BS"/>
</dbReference>
<dbReference type="InterPro" id="IPR008271">
    <property type="entry name" value="Ser/Thr_kinase_AS"/>
</dbReference>
<dbReference type="PANTHER" id="PTHR24055">
    <property type="entry name" value="MITOGEN-ACTIVATED PROTEIN KINASE"/>
    <property type="match status" value="1"/>
</dbReference>
<dbReference type="Pfam" id="PF00069">
    <property type="entry name" value="Pkinase"/>
    <property type="match status" value="1"/>
</dbReference>
<dbReference type="SMART" id="SM00220">
    <property type="entry name" value="S_TKc"/>
    <property type="match status" value="1"/>
</dbReference>
<dbReference type="SUPFAM" id="SSF56112">
    <property type="entry name" value="Protein kinase-like (PK-like)"/>
    <property type="match status" value="1"/>
</dbReference>
<dbReference type="PROSITE" id="PS00107">
    <property type="entry name" value="PROTEIN_KINASE_ATP"/>
    <property type="match status" value="1"/>
</dbReference>
<dbReference type="PROSITE" id="PS50011">
    <property type="entry name" value="PROTEIN_KINASE_DOM"/>
    <property type="match status" value="1"/>
</dbReference>
<dbReference type="PROSITE" id="PS00108">
    <property type="entry name" value="PROTEIN_KINASE_ST"/>
    <property type="match status" value="1"/>
</dbReference>